<keyword id="KW-0028">Amino-acid biosynthesis</keyword>
<keyword id="KW-0100">Branched-chain amino acid biosynthesis</keyword>
<keyword id="KW-0963">Cytoplasm</keyword>
<keyword id="KW-0432">Leucine biosynthesis</keyword>
<keyword id="KW-0460">Magnesium</keyword>
<keyword id="KW-0464">Manganese</keyword>
<keyword id="KW-0479">Metal-binding</keyword>
<keyword id="KW-0520">NAD</keyword>
<keyword id="KW-0560">Oxidoreductase</keyword>
<keyword id="KW-1185">Reference proteome</keyword>
<accession>Q6ANR1</accession>
<protein>
    <recommendedName>
        <fullName evidence="1">3-isopropylmalate dehydrogenase</fullName>
        <ecNumber evidence="1">1.1.1.85</ecNumber>
    </recommendedName>
    <alternativeName>
        <fullName evidence="1">3-IPM-DH</fullName>
    </alternativeName>
    <alternativeName>
        <fullName evidence="1">Beta-IPM dehydrogenase</fullName>
        <shortName evidence="1">IMDH</shortName>
    </alternativeName>
</protein>
<gene>
    <name evidence="1" type="primary">leuB</name>
    <name type="ordered locus">DP1284</name>
</gene>
<name>LEU3_DESPS</name>
<comment type="function">
    <text evidence="1">Catalyzes the oxidation of 3-carboxy-2-hydroxy-4-methylpentanoate (3-isopropylmalate) to 3-carboxy-4-methyl-2-oxopentanoate. The product decarboxylates to 4-methyl-2 oxopentanoate.</text>
</comment>
<comment type="catalytic activity">
    <reaction evidence="1">
        <text>(2R,3S)-3-isopropylmalate + NAD(+) = 4-methyl-2-oxopentanoate + CO2 + NADH</text>
        <dbReference type="Rhea" id="RHEA:32271"/>
        <dbReference type="ChEBI" id="CHEBI:16526"/>
        <dbReference type="ChEBI" id="CHEBI:17865"/>
        <dbReference type="ChEBI" id="CHEBI:35121"/>
        <dbReference type="ChEBI" id="CHEBI:57540"/>
        <dbReference type="ChEBI" id="CHEBI:57945"/>
        <dbReference type="EC" id="1.1.1.85"/>
    </reaction>
</comment>
<comment type="cofactor">
    <cofactor evidence="1">
        <name>Mg(2+)</name>
        <dbReference type="ChEBI" id="CHEBI:18420"/>
    </cofactor>
    <cofactor evidence="1">
        <name>Mn(2+)</name>
        <dbReference type="ChEBI" id="CHEBI:29035"/>
    </cofactor>
    <text evidence="1">Binds 1 Mg(2+) or Mn(2+) ion per subunit.</text>
</comment>
<comment type="pathway">
    <text evidence="1">Amino-acid biosynthesis; L-leucine biosynthesis; L-leucine from 3-methyl-2-oxobutanoate: step 3/4.</text>
</comment>
<comment type="subunit">
    <text evidence="1">Homodimer.</text>
</comment>
<comment type="subcellular location">
    <subcellularLocation>
        <location evidence="1">Cytoplasm</location>
    </subcellularLocation>
</comment>
<comment type="similarity">
    <text evidence="1">Belongs to the isocitrate and isopropylmalate dehydrogenases family. LeuB type 1 subfamily.</text>
</comment>
<sequence>MKKIAVLAGDGIGPEVMEQALKVLVAVQKKFGFELSFQHADVGGAAIDSHGVALPESTLTLCAESDAILFGSVGGPKWEHLPPAEQPERAALLPLRKHFDLFCNYRPARVFKSLTAACPLRADIIGDGFDILCVRELTSGIYFGTPKGREGAGEDEYAYDTMGYKRSEVRRIAHMAFAAARQRSGKVTSVDKANVLTTMVLWREVVLEVAKEYPDVKLNHIYVDNATMQLVRDPHQFDVMLCGNMFGDIISDEAAMLTGSMGLLASASLNTENFGLFEPAGGSAPDIAGQGIANPIAEILSAAMMLRYSLGYGEAADAIEAAVEKTLDRGICTADIAVDRSQAVNTAEMGDAIVAAL</sequence>
<evidence type="ECO:0000255" key="1">
    <source>
        <dbReference type="HAMAP-Rule" id="MF_01033"/>
    </source>
</evidence>
<proteinExistence type="inferred from homology"/>
<reference key="1">
    <citation type="journal article" date="2004" name="Environ. Microbiol.">
        <title>The genome of Desulfotalea psychrophila, a sulfate-reducing bacterium from permanently cold Arctic sediments.</title>
        <authorList>
            <person name="Rabus R."/>
            <person name="Ruepp A."/>
            <person name="Frickey T."/>
            <person name="Rattei T."/>
            <person name="Fartmann B."/>
            <person name="Stark M."/>
            <person name="Bauer M."/>
            <person name="Zibat A."/>
            <person name="Lombardot T."/>
            <person name="Becker I."/>
            <person name="Amann J."/>
            <person name="Gellner K."/>
            <person name="Teeling H."/>
            <person name="Leuschner W.D."/>
            <person name="Gloeckner F.-O."/>
            <person name="Lupas A.N."/>
            <person name="Amann R."/>
            <person name="Klenk H.-P."/>
        </authorList>
    </citation>
    <scope>NUCLEOTIDE SEQUENCE [LARGE SCALE GENOMIC DNA]</scope>
    <source>
        <strain>DSM 12343 / LSv54</strain>
    </source>
</reference>
<organism>
    <name type="scientific">Desulfotalea psychrophila (strain LSv54 / DSM 12343)</name>
    <dbReference type="NCBI Taxonomy" id="177439"/>
    <lineage>
        <taxon>Bacteria</taxon>
        <taxon>Pseudomonadati</taxon>
        <taxon>Thermodesulfobacteriota</taxon>
        <taxon>Desulfobulbia</taxon>
        <taxon>Desulfobulbales</taxon>
        <taxon>Desulfocapsaceae</taxon>
        <taxon>Desulfotalea</taxon>
    </lineage>
</organism>
<dbReference type="EC" id="1.1.1.85" evidence="1"/>
<dbReference type="EMBL" id="CR522870">
    <property type="protein sequence ID" value="CAG36013.1"/>
    <property type="molecule type" value="Genomic_DNA"/>
</dbReference>
<dbReference type="RefSeq" id="WP_011188525.1">
    <property type="nucleotide sequence ID" value="NC_006138.1"/>
</dbReference>
<dbReference type="SMR" id="Q6ANR1"/>
<dbReference type="STRING" id="177439.DP1284"/>
<dbReference type="KEGG" id="dps:DP1284"/>
<dbReference type="eggNOG" id="COG0473">
    <property type="taxonomic scope" value="Bacteria"/>
</dbReference>
<dbReference type="HOGENOM" id="CLU_031953_0_3_7"/>
<dbReference type="OrthoDB" id="9806254at2"/>
<dbReference type="UniPathway" id="UPA00048">
    <property type="reaction ID" value="UER00072"/>
</dbReference>
<dbReference type="Proteomes" id="UP000000602">
    <property type="component" value="Chromosome"/>
</dbReference>
<dbReference type="GO" id="GO:0005829">
    <property type="term" value="C:cytosol"/>
    <property type="evidence" value="ECO:0007669"/>
    <property type="project" value="TreeGrafter"/>
</dbReference>
<dbReference type="GO" id="GO:0003862">
    <property type="term" value="F:3-isopropylmalate dehydrogenase activity"/>
    <property type="evidence" value="ECO:0007669"/>
    <property type="project" value="UniProtKB-UniRule"/>
</dbReference>
<dbReference type="GO" id="GO:0000287">
    <property type="term" value="F:magnesium ion binding"/>
    <property type="evidence" value="ECO:0007669"/>
    <property type="project" value="InterPro"/>
</dbReference>
<dbReference type="GO" id="GO:0051287">
    <property type="term" value="F:NAD binding"/>
    <property type="evidence" value="ECO:0007669"/>
    <property type="project" value="InterPro"/>
</dbReference>
<dbReference type="GO" id="GO:0009098">
    <property type="term" value="P:L-leucine biosynthetic process"/>
    <property type="evidence" value="ECO:0007669"/>
    <property type="project" value="UniProtKB-UniRule"/>
</dbReference>
<dbReference type="FunFam" id="3.40.718.10:FF:000004">
    <property type="entry name" value="3-isopropylmalate dehydrogenase"/>
    <property type="match status" value="1"/>
</dbReference>
<dbReference type="Gene3D" id="3.40.718.10">
    <property type="entry name" value="Isopropylmalate Dehydrogenase"/>
    <property type="match status" value="1"/>
</dbReference>
<dbReference type="HAMAP" id="MF_01033">
    <property type="entry name" value="LeuB_type1"/>
    <property type="match status" value="1"/>
</dbReference>
<dbReference type="InterPro" id="IPR019818">
    <property type="entry name" value="IsoCit/isopropylmalate_DH_CS"/>
</dbReference>
<dbReference type="InterPro" id="IPR024084">
    <property type="entry name" value="IsoPropMal-DH-like_dom"/>
</dbReference>
<dbReference type="InterPro" id="IPR004429">
    <property type="entry name" value="Isopropylmalate_DH"/>
</dbReference>
<dbReference type="NCBIfam" id="TIGR00169">
    <property type="entry name" value="leuB"/>
    <property type="match status" value="1"/>
</dbReference>
<dbReference type="PANTHER" id="PTHR42979">
    <property type="entry name" value="3-ISOPROPYLMALATE DEHYDROGENASE"/>
    <property type="match status" value="1"/>
</dbReference>
<dbReference type="PANTHER" id="PTHR42979:SF1">
    <property type="entry name" value="3-ISOPROPYLMALATE DEHYDROGENASE"/>
    <property type="match status" value="1"/>
</dbReference>
<dbReference type="Pfam" id="PF00180">
    <property type="entry name" value="Iso_dh"/>
    <property type="match status" value="1"/>
</dbReference>
<dbReference type="SMART" id="SM01329">
    <property type="entry name" value="Iso_dh"/>
    <property type="match status" value="1"/>
</dbReference>
<dbReference type="SUPFAM" id="SSF53659">
    <property type="entry name" value="Isocitrate/Isopropylmalate dehydrogenase-like"/>
    <property type="match status" value="1"/>
</dbReference>
<dbReference type="PROSITE" id="PS00470">
    <property type="entry name" value="IDH_IMDH"/>
    <property type="match status" value="1"/>
</dbReference>
<feature type="chain" id="PRO_0000083688" description="3-isopropylmalate dehydrogenase">
    <location>
        <begin position="1"/>
        <end position="357"/>
    </location>
</feature>
<feature type="binding site" evidence="1">
    <location>
        <begin position="75"/>
        <end position="88"/>
    </location>
    <ligand>
        <name>NAD(+)</name>
        <dbReference type="ChEBI" id="CHEBI:57540"/>
    </ligand>
</feature>
<feature type="binding site" evidence="1">
    <location>
        <position position="96"/>
    </location>
    <ligand>
        <name>substrate</name>
    </ligand>
</feature>
<feature type="binding site" evidence="1">
    <location>
        <position position="106"/>
    </location>
    <ligand>
        <name>substrate</name>
    </ligand>
</feature>
<feature type="binding site" evidence="1">
    <location>
        <position position="135"/>
    </location>
    <ligand>
        <name>substrate</name>
    </ligand>
</feature>
<feature type="binding site" evidence="1">
    <location>
        <position position="224"/>
    </location>
    <ligand>
        <name>Mg(2+)</name>
        <dbReference type="ChEBI" id="CHEBI:18420"/>
    </ligand>
</feature>
<feature type="binding site" evidence="1">
    <location>
        <position position="224"/>
    </location>
    <ligand>
        <name>substrate</name>
    </ligand>
</feature>
<feature type="binding site" evidence="1">
    <location>
        <position position="248"/>
    </location>
    <ligand>
        <name>Mg(2+)</name>
        <dbReference type="ChEBI" id="CHEBI:18420"/>
    </ligand>
</feature>
<feature type="binding site" evidence="1">
    <location>
        <position position="252"/>
    </location>
    <ligand>
        <name>Mg(2+)</name>
        <dbReference type="ChEBI" id="CHEBI:18420"/>
    </ligand>
</feature>
<feature type="binding site" evidence="1">
    <location>
        <begin position="282"/>
        <end position="294"/>
    </location>
    <ligand>
        <name>NAD(+)</name>
        <dbReference type="ChEBI" id="CHEBI:57540"/>
    </ligand>
</feature>
<feature type="site" description="Important for catalysis" evidence="1">
    <location>
        <position position="142"/>
    </location>
</feature>
<feature type="site" description="Important for catalysis" evidence="1">
    <location>
        <position position="192"/>
    </location>
</feature>